<comment type="function">
    <text evidence="1">Catalyzes the NADPH-dependent reduction of L-glutamate 5-phosphate into L-glutamate 5-semialdehyde and phosphate. The product spontaneously undergoes cyclization to form 1-pyrroline-5-carboxylate.</text>
</comment>
<comment type="catalytic activity">
    <reaction evidence="1">
        <text>L-glutamate 5-semialdehyde + phosphate + NADP(+) = L-glutamyl 5-phosphate + NADPH + H(+)</text>
        <dbReference type="Rhea" id="RHEA:19541"/>
        <dbReference type="ChEBI" id="CHEBI:15378"/>
        <dbReference type="ChEBI" id="CHEBI:43474"/>
        <dbReference type="ChEBI" id="CHEBI:57783"/>
        <dbReference type="ChEBI" id="CHEBI:58066"/>
        <dbReference type="ChEBI" id="CHEBI:58274"/>
        <dbReference type="ChEBI" id="CHEBI:58349"/>
        <dbReference type="EC" id="1.2.1.41"/>
    </reaction>
</comment>
<comment type="pathway">
    <text evidence="1">Amino-acid biosynthesis; L-proline biosynthesis; L-glutamate 5-semialdehyde from L-glutamate: step 2/2.</text>
</comment>
<comment type="subcellular location">
    <subcellularLocation>
        <location evidence="1">Cytoplasm</location>
    </subcellularLocation>
</comment>
<comment type="similarity">
    <text evidence="1">Belongs to the gamma-glutamyl phosphate reductase family.</text>
</comment>
<sequence length="421" mass="44845">MTESVLDYMTRLGHAAREASRVLARTSTAQKNRALEAAAAALDDAREALAAANAQDLAAGRAGGLDEAMLDRLALTPARIDEMIEGLRQVARLPDPVGEIRDMRYMPSGIQVGKMRVPLGVIGIVYESRPNVTIDAASLCLKSGNATILRGGSEAIHSNQAIARCIRLGLAEAGLPAAAVQVVETTDRAAVGALIGMPEFVDVIVPRGGKGLIERISREAKVPVIKHLDGICHVYIDSAADLDKAIRVADNAKTQRFAPCNTMETLLVHAAIAARALPPLGEIYRAKGVELRGCPRSRELLGPGTLEASEEDWSSEYNAPILSVRVVDSLDEAIAHINRYGSHHTDAIVTESFTDARRFLAEVDSSSVMVNASTRFADGFEYGLGAEIGISTDKLHARGPVGLEGLTSEKYVVFGDGHVRG</sequence>
<proteinExistence type="inferred from homology"/>
<protein>
    <recommendedName>
        <fullName evidence="1">Gamma-glutamyl phosphate reductase</fullName>
        <shortName evidence="1">GPR</shortName>
        <ecNumber evidence="1">1.2.1.41</ecNumber>
    </recommendedName>
    <alternativeName>
        <fullName evidence="1">Glutamate-5-semialdehyde dehydrogenase</fullName>
    </alternativeName>
    <alternativeName>
        <fullName evidence="1">Glutamyl-gamma-semialdehyde dehydrogenase</fullName>
        <shortName evidence="1">GSA dehydrogenase</shortName>
    </alternativeName>
</protein>
<dbReference type="EC" id="1.2.1.41" evidence="1"/>
<dbReference type="EMBL" id="CP001157">
    <property type="protein sequence ID" value="ACO77080.1"/>
    <property type="molecule type" value="Genomic_DNA"/>
</dbReference>
<dbReference type="RefSeq" id="WP_012699505.1">
    <property type="nucleotide sequence ID" value="NC_012560.1"/>
</dbReference>
<dbReference type="SMR" id="C1DMQ0"/>
<dbReference type="STRING" id="322710.Avin_08350"/>
<dbReference type="EnsemblBacteria" id="ACO77080">
    <property type="protein sequence ID" value="ACO77080"/>
    <property type="gene ID" value="Avin_08350"/>
</dbReference>
<dbReference type="GeneID" id="88184218"/>
<dbReference type="KEGG" id="avn:Avin_08350"/>
<dbReference type="eggNOG" id="COG0014">
    <property type="taxonomic scope" value="Bacteria"/>
</dbReference>
<dbReference type="HOGENOM" id="CLU_030231_0_0_6"/>
<dbReference type="OrthoDB" id="9809970at2"/>
<dbReference type="UniPathway" id="UPA00098">
    <property type="reaction ID" value="UER00360"/>
</dbReference>
<dbReference type="Proteomes" id="UP000002424">
    <property type="component" value="Chromosome"/>
</dbReference>
<dbReference type="GO" id="GO:0005737">
    <property type="term" value="C:cytoplasm"/>
    <property type="evidence" value="ECO:0007669"/>
    <property type="project" value="UniProtKB-SubCell"/>
</dbReference>
<dbReference type="GO" id="GO:0004350">
    <property type="term" value="F:glutamate-5-semialdehyde dehydrogenase activity"/>
    <property type="evidence" value="ECO:0007669"/>
    <property type="project" value="UniProtKB-UniRule"/>
</dbReference>
<dbReference type="GO" id="GO:0050661">
    <property type="term" value="F:NADP binding"/>
    <property type="evidence" value="ECO:0007669"/>
    <property type="project" value="InterPro"/>
</dbReference>
<dbReference type="GO" id="GO:0055129">
    <property type="term" value="P:L-proline biosynthetic process"/>
    <property type="evidence" value="ECO:0007669"/>
    <property type="project" value="UniProtKB-UniRule"/>
</dbReference>
<dbReference type="CDD" id="cd07079">
    <property type="entry name" value="ALDH_F18-19_ProA-GPR"/>
    <property type="match status" value="1"/>
</dbReference>
<dbReference type="FunFam" id="3.40.309.10:FF:000006">
    <property type="entry name" value="Gamma-glutamyl phosphate reductase"/>
    <property type="match status" value="1"/>
</dbReference>
<dbReference type="Gene3D" id="3.40.605.10">
    <property type="entry name" value="Aldehyde Dehydrogenase, Chain A, domain 1"/>
    <property type="match status" value="1"/>
</dbReference>
<dbReference type="Gene3D" id="3.40.309.10">
    <property type="entry name" value="Aldehyde Dehydrogenase, Chain A, domain 2"/>
    <property type="match status" value="1"/>
</dbReference>
<dbReference type="HAMAP" id="MF_00412">
    <property type="entry name" value="ProA"/>
    <property type="match status" value="1"/>
</dbReference>
<dbReference type="InterPro" id="IPR016161">
    <property type="entry name" value="Ald_DH/histidinol_DH"/>
</dbReference>
<dbReference type="InterPro" id="IPR016163">
    <property type="entry name" value="Ald_DH_C"/>
</dbReference>
<dbReference type="InterPro" id="IPR016162">
    <property type="entry name" value="Ald_DH_N"/>
</dbReference>
<dbReference type="InterPro" id="IPR015590">
    <property type="entry name" value="Aldehyde_DH_dom"/>
</dbReference>
<dbReference type="InterPro" id="IPR020593">
    <property type="entry name" value="G-glutamylP_reductase_CS"/>
</dbReference>
<dbReference type="InterPro" id="IPR012134">
    <property type="entry name" value="Glu-5-SA_DH"/>
</dbReference>
<dbReference type="InterPro" id="IPR000965">
    <property type="entry name" value="GPR_dom"/>
</dbReference>
<dbReference type="NCBIfam" id="NF001221">
    <property type="entry name" value="PRK00197.1"/>
    <property type="match status" value="1"/>
</dbReference>
<dbReference type="NCBIfam" id="TIGR00407">
    <property type="entry name" value="proA"/>
    <property type="match status" value="1"/>
</dbReference>
<dbReference type="PANTHER" id="PTHR11063:SF8">
    <property type="entry name" value="DELTA-1-PYRROLINE-5-CARBOXYLATE SYNTHASE"/>
    <property type="match status" value="1"/>
</dbReference>
<dbReference type="PANTHER" id="PTHR11063">
    <property type="entry name" value="GLUTAMATE SEMIALDEHYDE DEHYDROGENASE"/>
    <property type="match status" value="1"/>
</dbReference>
<dbReference type="Pfam" id="PF00171">
    <property type="entry name" value="Aldedh"/>
    <property type="match status" value="2"/>
</dbReference>
<dbReference type="PIRSF" id="PIRSF000151">
    <property type="entry name" value="GPR"/>
    <property type="match status" value="1"/>
</dbReference>
<dbReference type="SUPFAM" id="SSF53720">
    <property type="entry name" value="ALDH-like"/>
    <property type="match status" value="1"/>
</dbReference>
<dbReference type="PROSITE" id="PS01223">
    <property type="entry name" value="PROA"/>
    <property type="match status" value="1"/>
</dbReference>
<evidence type="ECO:0000255" key="1">
    <source>
        <dbReference type="HAMAP-Rule" id="MF_00412"/>
    </source>
</evidence>
<feature type="chain" id="PRO_1000205990" description="Gamma-glutamyl phosphate reductase">
    <location>
        <begin position="1"/>
        <end position="421"/>
    </location>
</feature>
<organism>
    <name type="scientific">Azotobacter vinelandii (strain DJ / ATCC BAA-1303)</name>
    <dbReference type="NCBI Taxonomy" id="322710"/>
    <lineage>
        <taxon>Bacteria</taxon>
        <taxon>Pseudomonadati</taxon>
        <taxon>Pseudomonadota</taxon>
        <taxon>Gammaproteobacteria</taxon>
        <taxon>Pseudomonadales</taxon>
        <taxon>Pseudomonadaceae</taxon>
        <taxon>Azotobacter</taxon>
    </lineage>
</organism>
<name>PROA_AZOVD</name>
<reference key="1">
    <citation type="journal article" date="2009" name="J. Bacteriol.">
        <title>Genome sequence of Azotobacter vinelandii, an obligate aerobe specialized to support diverse anaerobic metabolic processes.</title>
        <authorList>
            <person name="Setubal J.C."/>
            <person name="Dos Santos P."/>
            <person name="Goldman B.S."/>
            <person name="Ertesvaag H."/>
            <person name="Espin G."/>
            <person name="Rubio L.M."/>
            <person name="Valla S."/>
            <person name="Almeida N.F."/>
            <person name="Balasubramanian D."/>
            <person name="Cromes L."/>
            <person name="Curatti L."/>
            <person name="Du Z."/>
            <person name="Godsy E."/>
            <person name="Goodner B."/>
            <person name="Hellner-Burris K."/>
            <person name="Hernandez J.A."/>
            <person name="Houmiel K."/>
            <person name="Imperial J."/>
            <person name="Kennedy C."/>
            <person name="Larson T.J."/>
            <person name="Latreille P."/>
            <person name="Ligon L.S."/>
            <person name="Lu J."/>
            <person name="Maerk M."/>
            <person name="Miller N.M."/>
            <person name="Norton S."/>
            <person name="O'Carroll I.P."/>
            <person name="Paulsen I."/>
            <person name="Raulfs E.C."/>
            <person name="Roemer R."/>
            <person name="Rosser J."/>
            <person name="Segura D."/>
            <person name="Slater S."/>
            <person name="Stricklin S.L."/>
            <person name="Studholme D.J."/>
            <person name="Sun J."/>
            <person name="Viana C.J."/>
            <person name="Wallin E."/>
            <person name="Wang B."/>
            <person name="Wheeler C."/>
            <person name="Zhu H."/>
            <person name="Dean D.R."/>
            <person name="Dixon R."/>
            <person name="Wood D."/>
        </authorList>
    </citation>
    <scope>NUCLEOTIDE SEQUENCE [LARGE SCALE GENOMIC DNA]</scope>
    <source>
        <strain>DJ / ATCC BAA-1303</strain>
    </source>
</reference>
<keyword id="KW-0028">Amino-acid biosynthesis</keyword>
<keyword id="KW-0963">Cytoplasm</keyword>
<keyword id="KW-0521">NADP</keyword>
<keyword id="KW-0560">Oxidoreductase</keyword>
<keyword id="KW-0641">Proline biosynthesis</keyword>
<accession>C1DMQ0</accession>
<gene>
    <name evidence="1" type="primary">proA</name>
    <name type="ordered locus">Avin_08350</name>
</gene>